<organism>
    <name type="scientific">Saccharolobus islandicus (strain M.16.4 / Kamchatka #3)</name>
    <name type="common">Sulfolobus islandicus</name>
    <dbReference type="NCBI Taxonomy" id="426118"/>
    <lineage>
        <taxon>Archaea</taxon>
        <taxon>Thermoproteota</taxon>
        <taxon>Thermoprotei</taxon>
        <taxon>Sulfolobales</taxon>
        <taxon>Sulfolobaceae</taxon>
        <taxon>Saccharolobus</taxon>
    </lineage>
</organism>
<gene>
    <name evidence="1" type="primary">sfsA</name>
    <name type="ordered locus">M164_2721</name>
</gene>
<feature type="chain" id="PRO_1000202727" description="Sugar fermentation stimulation protein homolog">
    <location>
        <begin position="1"/>
        <end position="240"/>
    </location>
</feature>
<protein>
    <recommendedName>
        <fullName evidence="1">Sugar fermentation stimulation protein homolog</fullName>
    </recommendedName>
</protein>
<reference key="1">
    <citation type="journal article" date="2009" name="Proc. Natl. Acad. Sci. U.S.A.">
        <title>Biogeography of the Sulfolobus islandicus pan-genome.</title>
        <authorList>
            <person name="Reno M.L."/>
            <person name="Held N.L."/>
            <person name="Fields C.J."/>
            <person name="Burke P.V."/>
            <person name="Whitaker R.J."/>
        </authorList>
    </citation>
    <scope>NUCLEOTIDE SEQUENCE [LARGE SCALE GENOMIC DNA]</scope>
    <source>
        <strain>M.16.4 / Kamchatka #3</strain>
    </source>
</reference>
<name>SFSA_SACI6</name>
<accession>C4KF50</accession>
<sequence length="240" mass="27994">MKERDSRNQIGDLPFRVKEGFSVYEFIEQLYEANVVERINRFLVKVTFNGKEFLAHLHDPGRLKDLIYPGNLVLIRETKGYKTKFSITAAYSNSRFVVLDSRLHNIIASKFLPEAYEKEIKVGNSRIDFKYDNTYLEVKGCTLVENEIAYFPDAPTERGRRHLKELRELMKKGFNAILLILVMRDDAKCFLPNEKTDPKFSIEFWNSIKEGLNVNIKTFKLVGNKIIYVRDIPLCKTNLT</sequence>
<proteinExistence type="inferred from homology"/>
<comment type="similarity">
    <text evidence="1">Belongs to the SfsA family.</text>
</comment>
<dbReference type="EMBL" id="CP001402">
    <property type="protein sequence ID" value="ACR43313.1"/>
    <property type="molecule type" value="Genomic_DNA"/>
</dbReference>
<dbReference type="RefSeq" id="WP_012719279.1">
    <property type="nucleotide sequence ID" value="NC_012726.1"/>
</dbReference>
<dbReference type="SMR" id="C4KF50"/>
<dbReference type="GeneID" id="84063006"/>
<dbReference type="KEGG" id="sid:M164_2721"/>
<dbReference type="HOGENOM" id="CLU_052299_1_0_2"/>
<dbReference type="Proteomes" id="UP000001479">
    <property type="component" value="Chromosome"/>
</dbReference>
<dbReference type="GO" id="GO:0003677">
    <property type="term" value="F:DNA binding"/>
    <property type="evidence" value="ECO:0007669"/>
    <property type="project" value="InterPro"/>
</dbReference>
<dbReference type="CDD" id="cd22357">
    <property type="entry name" value="SfsA-like"/>
    <property type="match status" value="1"/>
</dbReference>
<dbReference type="Gene3D" id="2.40.50.580">
    <property type="match status" value="1"/>
</dbReference>
<dbReference type="Gene3D" id="3.40.1350.60">
    <property type="match status" value="1"/>
</dbReference>
<dbReference type="HAMAP" id="MF_00095">
    <property type="entry name" value="SfsA"/>
    <property type="match status" value="1"/>
</dbReference>
<dbReference type="InterPro" id="IPR005224">
    <property type="entry name" value="SfsA"/>
</dbReference>
<dbReference type="InterPro" id="IPR040452">
    <property type="entry name" value="SfsA_C"/>
</dbReference>
<dbReference type="InterPro" id="IPR041465">
    <property type="entry name" value="SfsA_N"/>
</dbReference>
<dbReference type="NCBIfam" id="TIGR00230">
    <property type="entry name" value="sfsA"/>
    <property type="match status" value="1"/>
</dbReference>
<dbReference type="PANTHER" id="PTHR30545">
    <property type="entry name" value="SUGAR FERMENTATION STIMULATION PROTEIN A"/>
    <property type="match status" value="1"/>
</dbReference>
<dbReference type="PANTHER" id="PTHR30545:SF2">
    <property type="entry name" value="SUGAR FERMENTATION STIMULATION PROTEIN A"/>
    <property type="match status" value="1"/>
</dbReference>
<dbReference type="Pfam" id="PF03749">
    <property type="entry name" value="SfsA"/>
    <property type="match status" value="1"/>
</dbReference>
<dbReference type="Pfam" id="PF17746">
    <property type="entry name" value="SfsA_N"/>
    <property type="match status" value="1"/>
</dbReference>
<evidence type="ECO:0000255" key="1">
    <source>
        <dbReference type="HAMAP-Rule" id="MF_00095"/>
    </source>
</evidence>